<name>DXS_XANE5</name>
<organism>
    <name type="scientific">Xanthomonas euvesicatoria pv. vesicatoria (strain 85-10)</name>
    <name type="common">Xanthomonas campestris pv. vesicatoria</name>
    <dbReference type="NCBI Taxonomy" id="316273"/>
    <lineage>
        <taxon>Bacteria</taxon>
        <taxon>Pseudomonadati</taxon>
        <taxon>Pseudomonadota</taxon>
        <taxon>Gammaproteobacteria</taxon>
        <taxon>Lysobacterales</taxon>
        <taxon>Lysobacteraceae</taxon>
        <taxon>Xanthomonas</taxon>
    </lineage>
</organism>
<protein>
    <recommendedName>
        <fullName evidence="1">1-deoxy-D-xylulose-5-phosphate synthase</fullName>
        <ecNumber evidence="1">2.2.1.7</ecNumber>
    </recommendedName>
    <alternativeName>
        <fullName evidence="1">1-deoxyxylulose-5-phosphate synthase</fullName>
        <shortName evidence="1">DXP synthase</shortName>
        <shortName evidence="1">DXPS</shortName>
    </alternativeName>
</protein>
<evidence type="ECO:0000255" key="1">
    <source>
        <dbReference type="HAMAP-Rule" id="MF_00315"/>
    </source>
</evidence>
<evidence type="ECO:0000305" key="2"/>
<accession>Q3BRW8</accession>
<comment type="function">
    <text evidence="1">Catalyzes the acyloin condensation reaction between C atoms 2 and 3 of pyruvate and glyceraldehyde 3-phosphate to yield 1-deoxy-D-xylulose-5-phosphate (DXP).</text>
</comment>
<comment type="catalytic activity">
    <reaction evidence="1">
        <text>D-glyceraldehyde 3-phosphate + pyruvate + H(+) = 1-deoxy-D-xylulose 5-phosphate + CO2</text>
        <dbReference type="Rhea" id="RHEA:12605"/>
        <dbReference type="ChEBI" id="CHEBI:15361"/>
        <dbReference type="ChEBI" id="CHEBI:15378"/>
        <dbReference type="ChEBI" id="CHEBI:16526"/>
        <dbReference type="ChEBI" id="CHEBI:57792"/>
        <dbReference type="ChEBI" id="CHEBI:59776"/>
        <dbReference type="EC" id="2.2.1.7"/>
    </reaction>
</comment>
<comment type="cofactor">
    <cofactor evidence="1">
        <name>Mg(2+)</name>
        <dbReference type="ChEBI" id="CHEBI:18420"/>
    </cofactor>
    <text evidence="1">Binds 1 Mg(2+) ion per subunit.</text>
</comment>
<comment type="cofactor">
    <cofactor evidence="1">
        <name>thiamine diphosphate</name>
        <dbReference type="ChEBI" id="CHEBI:58937"/>
    </cofactor>
    <text evidence="1">Binds 1 thiamine pyrophosphate per subunit.</text>
</comment>
<comment type="pathway">
    <text evidence="1">Metabolic intermediate biosynthesis; 1-deoxy-D-xylulose 5-phosphate biosynthesis; 1-deoxy-D-xylulose 5-phosphate from D-glyceraldehyde 3-phosphate and pyruvate: step 1/1.</text>
</comment>
<comment type="subunit">
    <text evidence="1">Homodimer.</text>
</comment>
<comment type="similarity">
    <text evidence="1">Belongs to the transketolase family. DXPS subfamily.</text>
</comment>
<comment type="sequence caution" evidence="2">
    <conflict type="erroneous initiation">
        <sequence resource="EMBL-CDS" id="CAJ24443"/>
    </conflict>
</comment>
<feature type="chain" id="PRO_0000256503" description="1-deoxy-D-xylulose-5-phosphate synthase">
    <location>
        <begin position="1"/>
        <end position="638"/>
    </location>
</feature>
<feature type="binding site" evidence="1">
    <location>
        <position position="79"/>
    </location>
    <ligand>
        <name>thiamine diphosphate</name>
        <dbReference type="ChEBI" id="CHEBI:58937"/>
    </ligand>
</feature>
<feature type="binding site" evidence="1">
    <location>
        <begin position="120"/>
        <end position="122"/>
    </location>
    <ligand>
        <name>thiamine diphosphate</name>
        <dbReference type="ChEBI" id="CHEBI:58937"/>
    </ligand>
</feature>
<feature type="binding site" evidence="1">
    <location>
        <position position="151"/>
    </location>
    <ligand>
        <name>Mg(2+)</name>
        <dbReference type="ChEBI" id="CHEBI:18420"/>
    </ligand>
</feature>
<feature type="binding site" evidence="1">
    <location>
        <begin position="152"/>
        <end position="153"/>
    </location>
    <ligand>
        <name>thiamine diphosphate</name>
        <dbReference type="ChEBI" id="CHEBI:58937"/>
    </ligand>
</feature>
<feature type="binding site" evidence="1">
    <location>
        <position position="182"/>
    </location>
    <ligand>
        <name>Mg(2+)</name>
        <dbReference type="ChEBI" id="CHEBI:18420"/>
    </ligand>
</feature>
<feature type="binding site" evidence="1">
    <location>
        <position position="182"/>
    </location>
    <ligand>
        <name>thiamine diphosphate</name>
        <dbReference type="ChEBI" id="CHEBI:58937"/>
    </ligand>
</feature>
<feature type="binding site" evidence="1">
    <location>
        <position position="291"/>
    </location>
    <ligand>
        <name>thiamine diphosphate</name>
        <dbReference type="ChEBI" id="CHEBI:58937"/>
    </ligand>
</feature>
<feature type="binding site" evidence="1">
    <location>
        <position position="373"/>
    </location>
    <ligand>
        <name>thiamine diphosphate</name>
        <dbReference type="ChEBI" id="CHEBI:58937"/>
    </ligand>
</feature>
<keyword id="KW-0414">Isoprene biosynthesis</keyword>
<keyword id="KW-0460">Magnesium</keyword>
<keyword id="KW-0479">Metal-binding</keyword>
<keyword id="KW-0784">Thiamine biosynthesis</keyword>
<keyword id="KW-0786">Thiamine pyrophosphate</keyword>
<keyword id="KW-0808">Transferase</keyword>
<proteinExistence type="inferred from homology"/>
<dbReference type="EC" id="2.2.1.7" evidence="1"/>
<dbReference type="EMBL" id="AM039952">
    <property type="protein sequence ID" value="CAJ24443.1"/>
    <property type="status" value="ALT_INIT"/>
    <property type="molecule type" value="Genomic_DNA"/>
</dbReference>
<dbReference type="RefSeq" id="WP_011347886.1">
    <property type="nucleotide sequence ID" value="NZ_CP017190.1"/>
</dbReference>
<dbReference type="SMR" id="Q3BRW8"/>
<dbReference type="STRING" id="456327.BJD11_09070"/>
<dbReference type="GeneID" id="61779409"/>
<dbReference type="KEGG" id="xcv:XCV2764"/>
<dbReference type="eggNOG" id="COG1154">
    <property type="taxonomic scope" value="Bacteria"/>
</dbReference>
<dbReference type="HOGENOM" id="CLU_009227_1_4_6"/>
<dbReference type="UniPathway" id="UPA00064">
    <property type="reaction ID" value="UER00091"/>
</dbReference>
<dbReference type="Proteomes" id="UP000007069">
    <property type="component" value="Chromosome"/>
</dbReference>
<dbReference type="GO" id="GO:0005829">
    <property type="term" value="C:cytosol"/>
    <property type="evidence" value="ECO:0007669"/>
    <property type="project" value="TreeGrafter"/>
</dbReference>
<dbReference type="GO" id="GO:0008661">
    <property type="term" value="F:1-deoxy-D-xylulose-5-phosphate synthase activity"/>
    <property type="evidence" value="ECO:0007669"/>
    <property type="project" value="UniProtKB-UniRule"/>
</dbReference>
<dbReference type="GO" id="GO:0000287">
    <property type="term" value="F:magnesium ion binding"/>
    <property type="evidence" value="ECO:0007669"/>
    <property type="project" value="UniProtKB-UniRule"/>
</dbReference>
<dbReference type="GO" id="GO:0030976">
    <property type="term" value="F:thiamine pyrophosphate binding"/>
    <property type="evidence" value="ECO:0007669"/>
    <property type="project" value="UniProtKB-UniRule"/>
</dbReference>
<dbReference type="GO" id="GO:0052865">
    <property type="term" value="P:1-deoxy-D-xylulose 5-phosphate biosynthetic process"/>
    <property type="evidence" value="ECO:0007669"/>
    <property type="project" value="UniProtKB-UniPathway"/>
</dbReference>
<dbReference type="GO" id="GO:0019288">
    <property type="term" value="P:isopentenyl diphosphate biosynthetic process, methylerythritol 4-phosphate pathway"/>
    <property type="evidence" value="ECO:0007669"/>
    <property type="project" value="TreeGrafter"/>
</dbReference>
<dbReference type="GO" id="GO:0016114">
    <property type="term" value="P:terpenoid biosynthetic process"/>
    <property type="evidence" value="ECO:0007669"/>
    <property type="project" value="UniProtKB-UniRule"/>
</dbReference>
<dbReference type="GO" id="GO:0009228">
    <property type="term" value="P:thiamine biosynthetic process"/>
    <property type="evidence" value="ECO:0007669"/>
    <property type="project" value="UniProtKB-UniRule"/>
</dbReference>
<dbReference type="CDD" id="cd02007">
    <property type="entry name" value="TPP_DXS"/>
    <property type="match status" value="1"/>
</dbReference>
<dbReference type="CDD" id="cd07033">
    <property type="entry name" value="TPP_PYR_DXS_TK_like"/>
    <property type="match status" value="1"/>
</dbReference>
<dbReference type="FunFam" id="3.40.50.920:FF:000002">
    <property type="entry name" value="1-deoxy-D-xylulose-5-phosphate synthase"/>
    <property type="match status" value="1"/>
</dbReference>
<dbReference type="FunFam" id="3.40.50.970:FF:000005">
    <property type="entry name" value="1-deoxy-D-xylulose-5-phosphate synthase"/>
    <property type="match status" value="1"/>
</dbReference>
<dbReference type="Gene3D" id="3.40.50.920">
    <property type="match status" value="1"/>
</dbReference>
<dbReference type="Gene3D" id="3.40.50.970">
    <property type="match status" value="2"/>
</dbReference>
<dbReference type="HAMAP" id="MF_00315">
    <property type="entry name" value="DXP_synth"/>
    <property type="match status" value="1"/>
</dbReference>
<dbReference type="InterPro" id="IPR005477">
    <property type="entry name" value="Dxylulose-5-P_synthase"/>
</dbReference>
<dbReference type="InterPro" id="IPR029061">
    <property type="entry name" value="THDP-binding"/>
</dbReference>
<dbReference type="InterPro" id="IPR009014">
    <property type="entry name" value="Transketo_C/PFOR_II"/>
</dbReference>
<dbReference type="InterPro" id="IPR005475">
    <property type="entry name" value="Transketolase-like_Pyr-bd"/>
</dbReference>
<dbReference type="InterPro" id="IPR020826">
    <property type="entry name" value="Transketolase_BS"/>
</dbReference>
<dbReference type="InterPro" id="IPR033248">
    <property type="entry name" value="Transketolase_C"/>
</dbReference>
<dbReference type="InterPro" id="IPR049557">
    <property type="entry name" value="Transketolase_CS"/>
</dbReference>
<dbReference type="NCBIfam" id="TIGR00204">
    <property type="entry name" value="dxs"/>
    <property type="match status" value="1"/>
</dbReference>
<dbReference type="NCBIfam" id="NF003933">
    <property type="entry name" value="PRK05444.2-2"/>
    <property type="match status" value="1"/>
</dbReference>
<dbReference type="PANTHER" id="PTHR43322">
    <property type="entry name" value="1-D-DEOXYXYLULOSE 5-PHOSPHATE SYNTHASE-RELATED"/>
    <property type="match status" value="1"/>
</dbReference>
<dbReference type="PANTHER" id="PTHR43322:SF5">
    <property type="entry name" value="1-DEOXY-D-XYLULOSE-5-PHOSPHATE SYNTHASE, CHLOROPLASTIC"/>
    <property type="match status" value="1"/>
</dbReference>
<dbReference type="Pfam" id="PF13292">
    <property type="entry name" value="DXP_synthase_N"/>
    <property type="match status" value="1"/>
</dbReference>
<dbReference type="Pfam" id="PF02779">
    <property type="entry name" value="Transket_pyr"/>
    <property type="match status" value="1"/>
</dbReference>
<dbReference type="Pfam" id="PF02780">
    <property type="entry name" value="Transketolase_C"/>
    <property type="match status" value="1"/>
</dbReference>
<dbReference type="SMART" id="SM00861">
    <property type="entry name" value="Transket_pyr"/>
    <property type="match status" value="1"/>
</dbReference>
<dbReference type="SUPFAM" id="SSF52518">
    <property type="entry name" value="Thiamin diphosphate-binding fold (THDP-binding)"/>
    <property type="match status" value="2"/>
</dbReference>
<dbReference type="SUPFAM" id="SSF52922">
    <property type="entry name" value="TK C-terminal domain-like"/>
    <property type="match status" value="1"/>
</dbReference>
<dbReference type="PROSITE" id="PS00801">
    <property type="entry name" value="TRANSKETOLASE_1"/>
    <property type="match status" value="1"/>
</dbReference>
<dbReference type="PROSITE" id="PS00802">
    <property type="entry name" value="TRANSKETOLASE_2"/>
    <property type="match status" value="1"/>
</dbReference>
<gene>
    <name evidence="1" type="primary">dxs</name>
    <name type="ordered locus">XCV2764</name>
</gene>
<reference key="1">
    <citation type="journal article" date="2005" name="J. Bacteriol.">
        <title>Insights into genome plasticity and pathogenicity of the plant pathogenic Bacterium Xanthomonas campestris pv. vesicatoria revealed by the complete genome sequence.</title>
        <authorList>
            <person name="Thieme F."/>
            <person name="Koebnik R."/>
            <person name="Bekel T."/>
            <person name="Berger C."/>
            <person name="Boch J."/>
            <person name="Buettner D."/>
            <person name="Caldana C."/>
            <person name="Gaigalat L."/>
            <person name="Goesmann A."/>
            <person name="Kay S."/>
            <person name="Kirchner O."/>
            <person name="Lanz C."/>
            <person name="Linke B."/>
            <person name="McHardy A.C."/>
            <person name="Meyer F."/>
            <person name="Mittenhuber G."/>
            <person name="Nies D.H."/>
            <person name="Niesbach-Kloesgen U."/>
            <person name="Patschkowski T."/>
            <person name="Rueckert C."/>
            <person name="Rupp O."/>
            <person name="Schneiker S."/>
            <person name="Schuster S.C."/>
            <person name="Vorhoelter F.J."/>
            <person name="Weber E."/>
            <person name="Puehler A."/>
            <person name="Bonas U."/>
            <person name="Bartels D."/>
            <person name="Kaiser O."/>
        </authorList>
    </citation>
    <scope>NUCLEOTIDE SEQUENCE [LARGE SCALE GENOMIC DNA]</scope>
    <source>
        <strain>85-10</strain>
    </source>
</reference>
<sequence length="638" mass="68461">MIDTTRYPRLSRIQTPDDLRRFDEAELTAIAEELRSYLIESVGKSGGHFAAGLGVIELTVALHYLYQTPVDQLVWDVGHQTYPHKILTGRRDQIHTVKQKDGVAPFPKREESIYDTFGVGHSSTSISAALGMAIAAQRNGDDRKVVAVIGDGAMTAGMVYEALNHAGGMDPEPNLLVILNDNRMSISEAVGGLTKMLGRASGSRTLNAIREGGKKILGDKKNNPTARFVRRWEEHWKGMFVPSTLFEEMGFHYTGPIDGHDLPSLVGALKTLQTLKGPQLLHVITTKGKGYELAEGDQIGYHAVGPFDPSKGLVAKAGAKKPTYTDVFSDWVCDMAAAEPKLLVITPAMREGSGLVRFSKEYPQRYFDVAIAEQHAVTLAAGMATQGAKPVVAIYSTFLQRGYDQLVHDVAVQQLDVLFAIDRGGVVGPDGATHAGNLDLSFLRCVPHMVVMAPADEAECRQMLSTGVQYQGPAAVRYPRGTGPGVALDASLATLPIGKAQLRHSGTRIALLGFGATVDAAEAVGRELGLTVVNMRFVKPLDKAMLLELAKTHDGFVTIEDNVVAGGAGAGVSELLNAEAITMPMLHLGLPDSFQHHASREDLLAEAGIDQAGIRAAVLKRWPQLMTSKTPALNAAAG</sequence>